<name>MAP21_COLGM</name>
<organism>
    <name type="scientific">Colletotrichum graminicola (strain M1.001 / M2 / FGSC 10212)</name>
    <name type="common">Maize anthracnose fungus</name>
    <name type="synonym">Glomerella graminicola</name>
    <dbReference type="NCBI Taxonomy" id="645133"/>
    <lineage>
        <taxon>Eukaryota</taxon>
        <taxon>Fungi</taxon>
        <taxon>Dikarya</taxon>
        <taxon>Ascomycota</taxon>
        <taxon>Pezizomycotina</taxon>
        <taxon>Sordariomycetes</taxon>
        <taxon>Hypocreomycetidae</taxon>
        <taxon>Glomerellales</taxon>
        <taxon>Glomerellaceae</taxon>
        <taxon>Colletotrichum</taxon>
        <taxon>Colletotrichum graminicola species complex</taxon>
    </lineage>
</organism>
<reference key="1">
    <citation type="journal article" date="2012" name="Nat. Genet.">
        <title>Lifestyle transitions in plant pathogenic Colletotrichum fungi deciphered by genome and transcriptome analyses.</title>
        <authorList>
            <person name="O'Connell R.J."/>
            <person name="Thon M.R."/>
            <person name="Hacquard S."/>
            <person name="Amyotte S.G."/>
            <person name="Kleemann J."/>
            <person name="Torres M.F."/>
            <person name="Damm U."/>
            <person name="Buiate E.A."/>
            <person name="Epstein L."/>
            <person name="Alkan N."/>
            <person name="Altmueller J."/>
            <person name="Alvarado-Balderrama L."/>
            <person name="Bauser C.A."/>
            <person name="Becker C."/>
            <person name="Birren B.W."/>
            <person name="Chen Z."/>
            <person name="Choi J."/>
            <person name="Crouch J.A."/>
            <person name="Duvick J.P."/>
            <person name="Farman M.A."/>
            <person name="Gan P."/>
            <person name="Heiman D."/>
            <person name="Henrissat B."/>
            <person name="Howard R.J."/>
            <person name="Kabbage M."/>
            <person name="Koch C."/>
            <person name="Kracher B."/>
            <person name="Kubo Y."/>
            <person name="Law A.D."/>
            <person name="Lebrun M.-H."/>
            <person name="Lee Y.-H."/>
            <person name="Miyara I."/>
            <person name="Moore N."/>
            <person name="Neumann U."/>
            <person name="Nordstroem K."/>
            <person name="Panaccione D.G."/>
            <person name="Panstruga R."/>
            <person name="Place M."/>
            <person name="Proctor R.H."/>
            <person name="Prusky D."/>
            <person name="Rech G."/>
            <person name="Reinhardt R."/>
            <person name="Rollins J.A."/>
            <person name="Rounsley S."/>
            <person name="Schardl C.L."/>
            <person name="Schwartz D.C."/>
            <person name="Shenoy N."/>
            <person name="Shirasu K."/>
            <person name="Sikhakolli U.R."/>
            <person name="Stueber K."/>
            <person name="Sukno S.A."/>
            <person name="Sweigard J.A."/>
            <person name="Takano Y."/>
            <person name="Takahara H."/>
            <person name="Trail F."/>
            <person name="van der Does H.C."/>
            <person name="Voll L.M."/>
            <person name="Will I."/>
            <person name="Young S."/>
            <person name="Zeng Q."/>
            <person name="Zhang J."/>
            <person name="Zhou S."/>
            <person name="Dickman M.B."/>
            <person name="Schulze-Lefert P."/>
            <person name="Ver Loren van Themaat E."/>
            <person name="Ma L.-J."/>
            <person name="Vaillancourt L.J."/>
        </authorList>
    </citation>
    <scope>NUCLEOTIDE SEQUENCE [LARGE SCALE GENOMIC DNA]</scope>
    <source>
        <strain>M1.001 / M2 / FGSC 10212</strain>
    </source>
</reference>
<feature type="chain" id="PRO_0000407627" description="Methionine aminopeptidase 2-1">
    <location>
        <begin position="1"/>
        <end position="463"/>
    </location>
</feature>
<feature type="region of interest" description="Disordered" evidence="2">
    <location>
        <begin position="1"/>
        <end position="98"/>
    </location>
</feature>
<feature type="compositionally biased region" description="Basic and acidic residues" evidence="2">
    <location>
        <begin position="30"/>
        <end position="45"/>
    </location>
</feature>
<feature type="compositionally biased region" description="Acidic residues" evidence="2">
    <location>
        <begin position="46"/>
        <end position="55"/>
    </location>
</feature>
<feature type="compositionally biased region" description="Basic residues" evidence="2">
    <location>
        <begin position="69"/>
        <end position="81"/>
    </location>
</feature>
<feature type="binding site" evidence="1">
    <location>
        <position position="214"/>
    </location>
    <ligand>
        <name>substrate</name>
    </ligand>
</feature>
<feature type="binding site" evidence="1">
    <location>
        <position position="235"/>
    </location>
    <ligand>
        <name>a divalent metal cation</name>
        <dbReference type="ChEBI" id="CHEBI:60240"/>
        <label>1</label>
    </ligand>
</feature>
<feature type="binding site" evidence="1">
    <location>
        <position position="246"/>
    </location>
    <ligand>
        <name>a divalent metal cation</name>
        <dbReference type="ChEBI" id="CHEBI:60240"/>
        <label>1</label>
    </ligand>
</feature>
<feature type="binding site" evidence="1">
    <location>
        <position position="246"/>
    </location>
    <ligand>
        <name>a divalent metal cation</name>
        <dbReference type="ChEBI" id="CHEBI:60240"/>
        <label>2</label>
        <note>catalytic</note>
    </ligand>
</feature>
<feature type="binding site" evidence="1">
    <location>
        <position position="315"/>
    </location>
    <ligand>
        <name>a divalent metal cation</name>
        <dbReference type="ChEBI" id="CHEBI:60240"/>
        <label>2</label>
        <note>catalytic</note>
    </ligand>
</feature>
<feature type="binding site" evidence="1">
    <location>
        <position position="323"/>
    </location>
    <ligand>
        <name>substrate</name>
    </ligand>
</feature>
<feature type="binding site" evidence="1">
    <location>
        <position position="348"/>
    </location>
    <ligand>
        <name>a divalent metal cation</name>
        <dbReference type="ChEBI" id="CHEBI:60240"/>
        <label>2</label>
        <note>catalytic</note>
    </ligand>
</feature>
<feature type="binding site" evidence="1">
    <location>
        <position position="444"/>
    </location>
    <ligand>
        <name>a divalent metal cation</name>
        <dbReference type="ChEBI" id="CHEBI:60240"/>
        <label>1</label>
    </ligand>
</feature>
<feature type="binding site" evidence="1">
    <location>
        <position position="444"/>
    </location>
    <ligand>
        <name>a divalent metal cation</name>
        <dbReference type="ChEBI" id="CHEBI:60240"/>
        <label>2</label>
        <note>catalytic</note>
    </ligand>
</feature>
<protein>
    <recommendedName>
        <fullName evidence="1">Methionine aminopeptidase 2-1</fullName>
        <shortName evidence="1">MAP 2-1</shortName>
        <shortName evidence="1">MetAP 2-1</shortName>
        <ecNumber evidence="1">3.4.11.18</ecNumber>
    </recommendedName>
    <alternativeName>
        <fullName evidence="1">Peptidase M</fullName>
    </alternativeName>
</protein>
<gene>
    <name type="ORF">GLRG_04136</name>
</gene>
<keyword id="KW-0031">Aminopeptidase</keyword>
<keyword id="KW-0963">Cytoplasm</keyword>
<keyword id="KW-0378">Hydrolase</keyword>
<keyword id="KW-0479">Metal-binding</keyword>
<keyword id="KW-0645">Protease</keyword>
<keyword id="KW-1185">Reference proteome</keyword>
<dbReference type="EC" id="3.4.11.18" evidence="1"/>
<dbReference type="EMBL" id="GG697343">
    <property type="protein sequence ID" value="EFQ28992.1"/>
    <property type="molecule type" value="Genomic_DNA"/>
</dbReference>
<dbReference type="RefSeq" id="XP_008093012.1">
    <property type="nucleotide sequence ID" value="XM_008094821.1"/>
</dbReference>
<dbReference type="SMR" id="E3QDQ4"/>
<dbReference type="STRING" id="645133.E3QDQ4"/>
<dbReference type="EnsemblFungi" id="EFQ28992">
    <property type="protein sequence ID" value="EFQ28992"/>
    <property type="gene ID" value="GLRG_04136"/>
</dbReference>
<dbReference type="GeneID" id="24409501"/>
<dbReference type="VEuPathDB" id="FungiDB:GLRG_04136"/>
<dbReference type="eggNOG" id="KOG2775">
    <property type="taxonomic scope" value="Eukaryota"/>
</dbReference>
<dbReference type="HOGENOM" id="CLU_015857_7_1_1"/>
<dbReference type="OrthoDB" id="7848262at2759"/>
<dbReference type="Proteomes" id="UP000008782">
    <property type="component" value="Unassembled WGS sequence"/>
</dbReference>
<dbReference type="GO" id="GO:0005737">
    <property type="term" value="C:cytoplasm"/>
    <property type="evidence" value="ECO:0007669"/>
    <property type="project" value="UniProtKB-SubCell"/>
</dbReference>
<dbReference type="GO" id="GO:0004239">
    <property type="term" value="F:initiator methionyl aminopeptidase activity"/>
    <property type="evidence" value="ECO:0007669"/>
    <property type="project" value="UniProtKB-UniRule"/>
</dbReference>
<dbReference type="GO" id="GO:0046872">
    <property type="term" value="F:metal ion binding"/>
    <property type="evidence" value="ECO:0007669"/>
    <property type="project" value="UniProtKB-UniRule"/>
</dbReference>
<dbReference type="GO" id="GO:0070006">
    <property type="term" value="F:metalloaminopeptidase activity"/>
    <property type="evidence" value="ECO:0007669"/>
    <property type="project" value="UniProtKB-UniRule"/>
</dbReference>
<dbReference type="GO" id="GO:0006508">
    <property type="term" value="P:proteolysis"/>
    <property type="evidence" value="ECO:0007669"/>
    <property type="project" value="UniProtKB-KW"/>
</dbReference>
<dbReference type="CDD" id="cd01088">
    <property type="entry name" value="MetAP2"/>
    <property type="match status" value="1"/>
</dbReference>
<dbReference type="Gene3D" id="3.90.230.10">
    <property type="entry name" value="Creatinase/methionine aminopeptidase superfamily"/>
    <property type="match status" value="1"/>
</dbReference>
<dbReference type="Gene3D" id="1.10.10.10">
    <property type="entry name" value="Winged helix-like DNA-binding domain superfamily/Winged helix DNA-binding domain"/>
    <property type="match status" value="1"/>
</dbReference>
<dbReference type="HAMAP" id="MF_03175">
    <property type="entry name" value="MetAP_2_euk"/>
    <property type="match status" value="1"/>
</dbReference>
<dbReference type="InterPro" id="IPR036005">
    <property type="entry name" value="Creatinase/aminopeptidase-like"/>
</dbReference>
<dbReference type="InterPro" id="IPR050247">
    <property type="entry name" value="Met_Aminopeptidase_Type2"/>
</dbReference>
<dbReference type="InterPro" id="IPR000994">
    <property type="entry name" value="Pept_M24"/>
</dbReference>
<dbReference type="InterPro" id="IPR001714">
    <property type="entry name" value="Pept_M24_MAP"/>
</dbReference>
<dbReference type="InterPro" id="IPR002468">
    <property type="entry name" value="Pept_M24A_MAP2"/>
</dbReference>
<dbReference type="InterPro" id="IPR018349">
    <property type="entry name" value="Pept_M24A_MAP2_BS"/>
</dbReference>
<dbReference type="InterPro" id="IPR036388">
    <property type="entry name" value="WH-like_DNA-bd_sf"/>
</dbReference>
<dbReference type="InterPro" id="IPR036390">
    <property type="entry name" value="WH_DNA-bd_sf"/>
</dbReference>
<dbReference type="NCBIfam" id="TIGR00501">
    <property type="entry name" value="met_pdase_II"/>
    <property type="match status" value="1"/>
</dbReference>
<dbReference type="PANTHER" id="PTHR45777">
    <property type="entry name" value="METHIONINE AMINOPEPTIDASE 2"/>
    <property type="match status" value="1"/>
</dbReference>
<dbReference type="PANTHER" id="PTHR45777:SF1">
    <property type="entry name" value="METHIONINE AMINOPEPTIDASE 2-2"/>
    <property type="match status" value="1"/>
</dbReference>
<dbReference type="Pfam" id="PF00557">
    <property type="entry name" value="Peptidase_M24"/>
    <property type="match status" value="1"/>
</dbReference>
<dbReference type="PRINTS" id="PR00599">
    <property type="entry name" value="MAPEPTIDASE"/>
</dbReference>
<dbReference type="SUPFAM" id="SSF55920">
    <property type="entry name" value="Creatinase/aminopeptidase"/>
    <property type="match status" value="1"/>
</dbReference>
<dbReference type="SUPFAM" id="SSF46785">
    <property type="entry name" value="Winged helix' DNA-binding domain"/>
    <property type="match status" value="1"/>
</dbReference>
<dbReference type="PROSITE" id="PS01202">
    <property type="entry name" value="MAP_2"/>
    <property type="match status" value="1"/>
</dbReference>
<comment type="function">
    <text evidence="1">Cotranslationally removes the N-terminal methionine from nascent proteins. The N-terminal methionine is often cleaved when the second residue in the primary sequence is small and uncharged (Met-Ala-, Cys, Gly, Pro, Ser, Thr, or Val).</text>
</comment>
<comment type="catalytic activity">
    <reaction evidence="1">
        <text>Release of N-terminal amino acids, preferentially methionine, from peptides and arylamides.</text>
        <dbReference type="EC" id="3.4.11.18"/>
    </reaction>
</comment>
<comment type="cofactor">
    <cofactor evidence="1">
        <name>Co(2+)</name>
        <dbReference type="ChEBI" id="CHEBI:48828"/>
    </cofactor>
    <cofactor evidence="1">
        <name>Zn(2+)</name>
        <dbReference type="ChEBI" id="CHEBI:29105"/>
    </cofactor>
    <cofactor evidence="1">
        <name>Mn(2+)</name>
        <dbReference type="ChEBI" id="CHEBI:29035"/>
    </cofactor>
    <cofactor evidence="1">
        <name>Fe(2+)</name>
        <dbReference type="ChEBI" id="CHEBI:29033"/>
    </cofactor>
    <text evidence="1">Binds 2 divalent metal cations per subunit. Has a high-affinity and a low affinity metal-binding site. The true nature of the physiological cofactor is under debate. The enzyme is active with cobalt, zinc, manganese or divalent iron ions. Most likely, methionine aminopeptidases function as mononuclear Fe(2+)-metalloproteases under physiological conditions, and the catalytically relevant metal-binding site has been assigned to the histidine-containing high-affinity site.</text>
</comment>
<comment type="subcellular location">
    <subcellularLocation>
        <location evidence="1">Cytoplasm</location>
    </subcellularLocation>
</comment>
<comment type="similarity">
    <text evidence="1">Belongs to the peptidase M24A family. Methionine aminopeptidase eukaryotic type 2 subfamily.</text>
</comment>
<proteinExistence type="inferred from homology"/>
<evidence type="ECO:0000255" key="1">
    <source>
        <dbReference type="HAMAP-Rule" id="MF_03175"/>
    </source>
</evidence>
<evidence type="ECO:0000256" key="2">
    <source>
        <dbReference type="SAM" id="MobiDB-lite"/>
    </source>
</evidence>
<sequence>MGSKTPEEQIPGGNGGPPSTGPSSSGGEPRGTHLSRDGDGSLGDHGDDDDADEDDVSSRPLRADVEEKKKKKRPKKKKKPAAAKEQSSPPRVPLSDLFPLGEYPAGEDLVYDRVPQPDANTARTTTAELRYQSRKHLEDPALLNDYRKAAEVHRQVRHWVQEAVKPGWTLLDIATGIEDGVRSLLANQGIEPGDNLRSGMGFPTGLCLNHETAHYTPNPGQRDVVLQHGDVMKVDYGVQVNGWIVDSAFTMSFDPTYDNLLAAARDATNSGIKAAGIDVRICDVSAEIQEAMESYEVEIRGKTYPVKAVRNICAHDIKRYRIHGGKSIPFIRNNDQTKMEEGEIFAIETFGTTGRGKLYDDIGVYGYGLLHDAPAQVRLPFASANRLCKTIKEQFGSIVFCRRYLDRLGLDRYLAGLNCLVSHGVLESYAPLADIKGSYTSQFEHTILLRESSKEIVSRGSDY</sequence>
<accession>E3QDQ4</accession>